<keyword id="KW-0963">Cytoplasm</keyword>
<keyword id="KW-0255">Endonuclease</keyword>
<keyword id="KW-0378">Hydrolase</keyword>
<keyword id="KW-0460">Magnesium</keyword>
<keyword id="KW-0479">Metal-binding</keyword>
<keyword id="KW-0507">mRNA processing</keyword>
<keyword id="KW-0540">Nuclease</keyword>
<keyword id="KW-0694">RNA-binding</keyword>
<keyword id="KW-0698">rRNA processing</keyword>
<keyword id="KW-0699">rRNA-binding</keyword>
<keyword id="KW-0819">tRNA processing</keyword>
<accession>A4XSC4</accession>
<name>RNC_ECTM1</name>
<protein>
    <recommendedName>
        <fullName evidence="1">Ribonuclease 3</fullName>
        <ecNumber evidence="1">3.1.26.3</ecNumber>
    </recommendedName>
    <alternativeName>
        <fullName evidence="1">Ribonuclease III</fullName>
        <shortName evidence="1">RNase III</shortName>
    </alternativeName>
</protein>
<feature type="chain" id="PRO_1000075789" description="Ribonuclease 3">
    <location>
        <begin position="1"/>
        <end position="229"/>
    </location>
</feature>
<feature type="domain" description="RNase III" evidence="1">
    <location>
        <begin position="5"/>
        <end position="127"/>
    </location>
</feature>
<feature type="domain" description="DRBM" evidence="1">
    <location>
        <begin position="154"/>
        <end position="224"/>
    </location>
</feature>
<feature type="active site" evidence="1">
    <location>
        <position position="44"/>
    </location>
</feature>
<feature type="active site" evidence="1">
    <location>
        <position position="116"/>
    </location>
</feature>
<feature type="binding site" evidence="1">
    <location>
        <position position="40"/>
    </location>
    <ligand>
        <name>Mg(2+)</name>
        <dbReference type="ChEBI" id="CHEBI:18420"/>
    </ligand>
</feature>
<feature type="binding site" evidence="1">
    <location>
        <position position="113"/>
    </location>
    <ligand>
        <name>Mg(2+)</name>
        <dbReference type="ChEBI" id="CHEBI:18420"/>
    </ligand>
</feature>
<feature type="binding site" evidence="1">
    <location>
        <position position="116"/>
    </location>
    <ligand>
        <name>Mg(2+)</name>
        <dbReference type="ChEBI" id="CHEBI:18420"/>
    </ligand>
</feature>
<sequence>MSPNLSRLERKLGHSFKDQDLMILALTHRSFAGRNNERLEFLGDAILNFVAGEALFERFPQAREGQLSRLRARLVKGETLAVLARGFELGEYLRLGSGELKSGGFRRESILADALEALIGAIYLDAGMDAARERVLDWLSGELDGLTLIDTNKDPKTRLQEFLQSRACELPRYEVVDIQGEPHCRTFMVECQVALLNEKTLGQGGSRRIAEQVAAAAALIALGVENGND</sequence>
<reference key="1">
    <citation type="submission" date="2007-04" db="EMBL/GenBank/DDBJ databases">
        <title>Complete sequence of Pseudomonas mendocina ymp.</title>
        <authorList>
            <consortium name="US DOE Joint Genome Institute"/>
            <person name="Copeland A."/>
            <person name="Lucas S."/>
            <person name="Lapidus A."/>
            <person name="Barry K."/>
            <person name="Glavina del Rio T."/>
            <person name="Dalin E."/>
            <person name="Tice H."/>
            <person name="Pitluck S."/>
            <person name="Kiss H."/>
            <person name="Brettin T."/>
            <person name="Detter J.C."/>
            <person name="Bruce D."/>
            <person name="Han C."/>
            <person name="Schmutz J."/>
            <person name="Larimer F."/>
            <person name="Land M."/>
            <person name="Hauser L."/>
            <person name="Kyrpides N."/>
            <person name="Mikhailova N."/>
            <person name="Hersman L."/>
            <person name="Dubois J."/>
            <person name="Maurice P."/>
            <person name="Richardson P."/>
        </authorList>
    </citation>
    <scope>NUCLEOTIDE SEQUENCE [LARGE SCALE GENOMIC DNA]</scope>
    <source>
        <strain>ymp</strain>
    </source>
</reference>
<evidence type="ECO:0000255" key="1">
    <source>
        <dbReference type="HAMAP-Rule" id="MF_00104"/>
    </source>
</evidence>
<organism>
    <name type="scientific">Ectopseudomonas mendocina (strain ymp)</name>
    <name type="common">Pseudomonas mendocina</name>
    <dbReference type="NCBI Taxonomy" id="399739"/>
    <lineage>
        <taxon>Bacteria</taxon>
        <taxon>Pseudomonadati</taxon>
        <taxon>Pseudomonadota</taxon>
        <taxon>Gammaproteobacteria</taxon>
        <taxon>Pseudomonadales</taxon>
        <taxon>Pseudomonadaceae</taxon>
        <taxon>Ectopseudomonas</taxon>
    </lineage>
</organism>
<dbReference type="EC" id="3.1.26.3" evidence="1"/>
<dbReference type="EMBL" id="CP000680">
    <property type="protein sequence ID" value="ABP84240.1"/>
    <property type="molecule type" value="Genomic_DNA"/>
</dbReference>
<dbReference type="SMR" id="A4XSC4"/>
<dbReference type="STRING" id="399739.Pmen_1475"/>
<dbReference type="KEGG" id="pmy:Pmen_1475"/>
<dbReference type="PATRIC" id="fig|399739.8.peg.1497"/>
<dbReference type="eggNOG" id="COG0571">
    <property type="taxonomic scope" value="Bacteria"/>
</dbReference>
<dbReference type="HOGENOM" id="CLU_000907_1_1_6"/>
<dbReference type="OrthoDB" id="9805026at2"/>
<dbReference type="GO" id="GO:0005737">
    <property type="term" value="C:cytoplasm"/>
    <property type="evidence" value="ECO:0007669"/>
    <property type="project" value="UniProtKB-SubCell"/>
</dbReference>
<dbReference type="GO" id="GO:0003725">
    <property type="term" value="F:double-stranded RNA binding"/>
    <property type="evidence" value="ECO:0007669"/>
    <property type="project" value="TreeGrafter"/>
</dbReference>
<dbReference type="GO" id="GO:0046872">
    <property type="term" value="F:metal ion binding"/>
    <property type="evidence" value="ECO:0007669"/>
    <property type="project" value="UniProtKB-KW"/>
</dbReference>
<dbReference type="GO" id="GO:0004525">
    <property type="term" value="F:ribonuclease III activity"/>
    <property type="evidence" value="ECO:0007669"/>
    <property type="project" value="UniProtKB-UniRule"/>
</dbReference>
<dbReference type="GO" id="GO:0019843">
    <property type="term" value="F:rRNA binding"/>
    <property type="evidence" value="ECO:0007669"/>
    <property type="project" value="UniProtKB-KW"/>
</dbReference>
<dbReference type="GO" id="GO:0006397">
    <property type="term" value="P:mRNA processing"/>
    <property type="evidence" value="ECO:0007669"/>
    <property type="project" value="UniProtKB-UniRule"/>
</dbReference>
<dbReference type="GO" id="GO:0010468">
    <property type="term" value="P:regulation of gene expression"/>
    <property type="evidence" value="ECO:0007669"/>
    <property type="project" value="TreeGrafter"/>
</dbReference>
<dbReference type="GO" id="GO:0006364">
    <property type="term" value="P:rRNA processing"/>
    <property type="evidence" value="ECO:0007669"/>
    <property type="project" value="UniProtKB-UniRule"/>
</dbReference>
<dbReference type="GO" id="GO:0008033">
    <property type="term" value="P:tRNA processing"/>
    <property type="evidence" value="ECO:0007669"/>
    <property type="project" value="UniProtKB-KW"/>
</dbReference>
<dbReference type="CDD" id="cd10845">
    <property type="entry name" value="DSRM_RNAse_III_family"/>
    <property type="match status" value="1"/>
</dbReference>
<dbReference type="CDD" id="cd00593">
    <property type="entry name" value="RIBOc"/>
    <property type="match status" value="1"/>
</dbReference>
<dbReference type="FunFam" id="1.10.1520.10:FF:000001">
    <property type="entry name" value="Ribonuclease 3"/>
    <property type="match status" value="1"/>
</dbReference>
<dbReference type="FunFam" id="3.30.160.20:FF:000003">
    <property type="entry name" value="Ribonuclease 3"/>
    <property type="match status" value="1"/>
</dbReference>
<dbReference type="Gene3D" id="3.30.160.20">
    <property type="match status" value="1"/>
</dbReference>
<dbReference type="Gene3D" id="1.10.1520.10">
    <property type="entry name" value="Ribonuclease III domain"/>
    <property type="match status" value="1"/>
</dbReference>
<dbReference type="HAMAP" id="MF_00104">
    <property type="entry name" value="RNase_III"/>
    <property type="match status" value="1"/>
</dbReference>
<dbReference type="InterPro" id="IPR014720">
    <property type="entry name" value="dsRBD_dom"/>
</dbReference>
<dbReference type="InterPro" id="IPR011907">
    <property type="entry name" value="RNase_III"/>
</dbReference>
<dbReference type="InterPro" id="IPR000999">
    <property type="entry name" value="RNase_III_dom"/>
</dbReference>
<dbReference type="InterPro" id="IPR036389">
    <property type="entry name" value="RNase_III_sf"/>
</dbReference>
<dbReference type="NCBIfam" id="TIGR02191">
    <property type="entry name" value="RNaseIII"/>
    <property type="match status" value="1"/>
</dbReference>
<dbReference type="PANTHER" id="PTHR11207:SF0">
    <property type="entry name" value="RIBONUCLEASE 3"/>
    <property type="match status" value="1"/>
</dbReference>
<dbReference type="PANTHER" id="PTHR11207">
    <property type="entry name" value="RIBONUCLEASE III"/>
    <property type="match status" value="1"/>
</dbReference>
<dbReference type="Pfam" id="PF00035">
    <property type="entry name" value="dsrm"/>
    <property type="match status" value="1"/>
</dbReference>
<dbReference type="Pfam" id="PF14622">
    <property type="entry name" value="Ribonucleas_3_3"/>
    <property type="match status" value="1"/>
</dbReference>
<dbReference type="SMART" id="SM00358">
    <property type="entry name" value="DSRM"/>
    <property type="match status" value="1"/>
</dbReference>
<dbReference type="SMART" id="SM00535">
    <property type="entry name" value="RIBOc"/>
    <property type="match status" value="1"/>
</dbReference>
<dbReference type="SUPFAM" id="SSF54768">
    <property type="entry name" value="dsRNA-binding domain-like"/>
    <property type="match status" value="1"/>
</dbReference>
<dbReference type="SUPFAM" id="SSF69065">
    <property type="entry name" value="RNase III domain-like"/>
    <property type="match status" value="1"/>
</dbReference>
<dbReference type="PROSITE" id="PS50137">
    <property type="entry name" value="DS_RBD"/>
    <property type="match status" value="1"/>
</dbReference>
<dbReference type="PROSITE" id="PS00517">
    <property type="entry name" value="RNASE_3_1"/>
    <property type="match status" value="1"/>
</dbReference>
<dbReference type="PROSITE" id="PS50142">
    <property type="entry name" value="RNASE_3_2"/>
    <property type="match status" value="1"/>
</dbReference>
<comment type="function">
    <text evidence="1">Digests double-stranded RNA. Involved in the processing of primary rRNA transcript to yield the immediate precursors to the large and small rRNAs (23S and 16S). Processes some mRNAs, and tRNAs when they are encoded in the rRNA operon. Processes pre-crRNA and tracrRNA of type II CRISPR loci if present in the organism.</text>
</comment>
<comment type="catalytic activity">
    <reaction evidence="1">
        <text>Endonucleolytic cleavage to 5'-phosphomonoester.</text>
        <dbReference type="EC" id="3.1.26.3"/>
    </reaction>
</comment>
<comment type="cofactor">
    <cofactor evidence="1">
        <name>Mg(2+)</name>
        <dbReference type="ChEBI" id="CHEBI:18420"/>
    </cofactor>
</comment>
<comment type="subunit">
    <text evidence="1">Homodimer.</text>
</comment>
<comment type="subcellular location">
    <subcellularLocation>
        <location evidence="1">Cytoplasm</location>
    </subcellularLocation>
</comment>
<comment type="similarity">
    <text evidence="1">Belongs to the ribonuclease III family.</text>
</comment>
<gene>
    <name evidence="1" type="primary">rnc</name>
    <name type="ordered locus">Pmen_1475</name>
</gene>
<proteinExistence type="inferred from homology"/>